<dbReference type="EC" id="3.5.3.1" evidence="1"/>
<dbReference type="EMBL" id="AE008918">
    <property type="protein sequence ID" value="AAL53638.1"/>
    <property type="status" value="ALT_INIT"/>
    <property type="molecule type" value="Genomic_DNA"/>
</dbReference>
<dbReference type="PIR" id="AC3559">
    <property type="entry name" value="AC3559"/>
</dbReference>
<dbReference type="SMR" id="P0A2X9"/>
<dbReference type="KEGG" id="bme:BMEII0396"/>
<dbReference type="KEGG" id="bmel:DK63_2842"/>
<dbReference type="PATRIC" id="fig|224914.52.peg.2978"/>
<dbReference type="eggNOG" id="COG0010">
    <property type="taxonomic scope" value="Bacteria"/>
</dbReference>
<dbReference type="PhylomeDB" id="P0A2X9"/>
<dbReference type="UniPathway" id="UPA00158">
    <property type="reaction ID" value="UER00270"/>
</dbReference>
<dbReference type="Proteomes" id="UP000000419">
    <property type="component" value="Chromosome II"/>
</dbReference>
<dbReference type="GO" id="GO:0005737">
    <property type="term" value="C:cytoplasm"/>
    <property type="evidence" value="ECO:0007669"/>
    <property type="project" value="TreeGrafter"/>
</dbReference>
<dbReference type="GO" id="GO:0004053">
    <property type="term" value="F:arginase activity"/>
    <property type="evidence" value="ECO:0007669"/>
    <property type="project" value="UniProtKB-EC"/>
</dbReference>
<dbReference type="GO" id="GO:0030145">
    <property type="term" value="F:manganese ion binding"/>
    <property type="evidence" value="ECO:0007669"/>
    <property type="project" value="TreeGrafter"/>
</dbReference>
<dbReference type="GO" id="GO:0019547">
    <property type="term" value="P:arginine catabolic process to ornithine"/>
    <property type="evidence" value="ECO:0007669"/>
    <property type="project" value="TreeGrafter"/>
</dbReference>
<dbReference type="GO" id="GO:0000050">
    <property type="term" value="P:urea cycle"/>
    <property type="evidence" value="ECO:0007669"/>
    <property type="project" value="UniProtKB-UniPathway"/>
</dbReference>
<dbReference type="CDD" id="cd09989">
    <property type="entry name" value="Arginase"/>
    <property type="match status" value="1"/>
</dbReference>
<dbReference type="FunFam" id="3.40.800.10:FF:000012">
    <property type="entry name" value="Arginase"/>
    <property type="match status" value="1"/>
</dbReference>
<dbReference type="Gene3D" id="3.40.800.10">
    <property type="entry name" value="Ureohydrolase domain"/>
    <property type="match status" value="1"/>
</dbReference>
<dbReference type="InterPro" id="IPR014033">
    <property type="entry name" value="Arginase"/>
</dbReference>
<dbReference type="InterPro" id="IPR006035">
    <property type="entry name" value="Ureohydrolase"/>
</dbReference>
<dbReference type="InterPro" id="IPR023696">
    <property type="entry name" value="Ureohydrolase_dom_sf"/>
</dbReference>
<dbReference type="InterPro" id="IPR020855">
    <property type="entry name" value="Ureohydrolase_Mn_BS"/>
</dbReference>
<dbReference type="NCBIfam" id="TIGR01229">
    <property type="entry name" value="rocF_arginase"/>
    <property type="match status" value="1"/>
</dbReference>
<dbReference type="PANTHER" id="PTHR43782">
    <property type="entry name" value="ARGINASE"/>
    <property type="match status" value="1"/>
</dbReference>
<dbReference type="PANTHER" id="PTHR43782:SF3">
    <property type="entry name" value="ARGINASE"/>
    <property type="match status" value="1"/>
</dbReference>
<dbReference type="Pfam" id="PF00491">
    <property type="entry name" value="Arginase"/>
    <property type="match status" value="1"/>
</dbReference>
<dbReference type="PIRSF" id="PIRSF036979">
    <property type="entry name" value="Arginase"/>
    <property type="match status" value="1"/>
</dbReference>
<dbReference type="PRINTS" id="PR00116">
    <property type="entry name" value="ARGINASE"/>
</dbReference>
<dbReference type="SUPFAM" id="SSF52768">
    <property type="entry name" value="Arginase/deacetylase"/>
    <property type="match status" value="1"/>
</dbReference>
<dbReference type="PROSITE" id="PS01053">
    <property type="entry name" value="ARGINASE_1"/>
    <property type="match status" value="1"/>
</dbReference>
<dbReference type="PROSITE" id="PS51409">
    <property type="entry name" value="ARGINASE_2"/>
    <property type="match status" value="1"/>
</dbReference>
<accession>P0A2X9</accession>
<accession>Q59174</accession>
<organism>
    <name type="scientific">Brucella melitensis biotype 1 (strain ATCC 23456 / CCUG 17765 / NCTC 10094 / 16M)</name>
    <dbReference type="NCBI Taxonomy" id="224914"/>
    <lineage>
        <taxon>Bacteria</taxon>
        <taxon>Pseudomonadati</taxon>
        <taxon>Pseudomonadota</taxon>
        <taxon>Alphaproteobacteria</taxon>
        <taxon>Hyphomicrobiales</taxon>
        <taxon>Brucellaceae</taxon>
        <taxon>Brucella/Ochrobactrum group</taxon>
        <taxon>Brucella</taxon>
    </lineage>
</organism>
<proteinExistence type="inferred from homology"/>
<sequence>MHCKILGLPVQEGTGRKGCNMGPDSYRAAGIADAIRELGHECTDLGNLAPAAQRPLQHPNHAIKALPYAVAWIEAISEAAYRESAEGFPIFLGGDHLLAAGTVPGIARRAAEKGRKQFVLWLDAHTDFHTLETTTSGNLHGTPVAYYTGQKGFEGYFPKLAAPIDPHNVCMLGIRSVDPAEREAVKKTEVIVYDMRLIDEHGVAALLRRFLERVKAEDGLLHVSLDVDFLDPSIAPAVGTTVPGGATFREAHLIMEMLHDSGLVTSLDLVELNPFLDERGRTAAVMVDLMASLLGRSVMDRPTISY</sequence>
<name>ARGI_BRUME</name>
<evidence type="ECO:0000250" key="1">
    <source>
        <dbReference type="UniProtKB" id="P05089"/>
    </source>
</evidence>
<evidence type="ECO:0000250" key="2">
    <source>
        <dbReference type="UniProtKB" id="P53608"/>
    </source>
</evidence>
<evidence type="ECO:0000255" key="3">
    <source>
        <dbReference type="PROSITE-ProRule" id="PRU00742"/>
    </source>
</evidence>
<evidence type="ECO:0000305" key="4"/>
<gene>
    <name type="primary">arcB</name>
    <name type="ordered locus">BMEII0396</name>
</gene>
<protein>
    <recommendedName>
        <fullName>Arginase</fullName>
        <ecNumber evidence="1">3.5.3.1</ecNumber>
    </recommendedName>
</protein>
<feature type="chain" id="PRO_0000173717" description="Arginase">
    <location>
        <begin position="1"/>
        <end position="306"/>
    </location>
</feature>
<feature type="binding site" evidence="3">
    <location>
        <position position="96"/>
    </location>
    <ligand>
        <name>Mn(2+)</name>
        <dbReference type="ChEBI" id="CHEBI:29035"/>
        <label>1</label>
    </ligand>
</feature>
<feature type="binding site" evidence="3">
    <location>
        <position position="123"/>
    </location>
    <ligand>
        <name>Mn(2+)</name>
        <dbReference type="ChEBI" id="CHEBI:29035"/>
        <label>1</label>
    </ligand>
</feature>
<feature type="binding site" evidence="3">
    <location>
        <position position="123"/>
    </location>
    <ligand>
        <name>Mn(2+)</name>
        <dbReference type="ChEBI" id="CHEBI:29035"/>
        <label>2</label>
    </ligand>
</feature>
<feature type="binding site" evidence="2">
    <location>
        <begin position="125"/>
        <end position="129"/>
    </location>
    <ligand>
        <name>substrate</name>
    </ligand>
</feature>
<feature type="binding site" evidence="3">
    <location>
        <position position="125"/>
    </location>
    <ligand>
        <name>Mn(2+)</name>
        <dbReference type="ChEBI" id="CHEBI:29035"/>
        <label>2</label>
    </ligand>
</feature>
<feature type="binding site" evidence="3">
    <location>
        <position position="127"/>
    </location>
    <ligand>
        <name>Mn(2+)</name>
        <dbReference type="ChEBI" id="CHEBI:29035"/>
        <label>1</label>
    </ligand>
</feature>
<feature type="binding site" evidence="2">
    <location>
        <begin position="136"/>
        <end position="138"/>
    </location>
    <ligand>
        <name>substrate</name>
    </ligand>
</feature>
<feature type="binding site" evidence="2">
    <location>
        <position position="178"/>
    </location>
    <ligand>
        <name>substrate</name>
    </ligand>
</feature>
<feature type="binding site" evidence="3">
    <location>
        <position position="226"/>
    </location>
    <ligand>
        <name>Mn(2+)</name>
        <dbReference type="ChEBI" id="CHEBI:29035"/>
        <label>1</label>
    </ligand>
</feature>
<feature type="binding site" evidence="3">
    <location>
        <position position="226"/>
    </location>
    <ligand>
        <name>Mn(2+)</name>
        <dbReference type="ChEBI" id="CHEBI:29035"/>
        <label>2</label>
    </ligand>
</feature>
<feature type="binding site" evidence="3">
    <location>
        <position position="228"/>
    </location>
    <ligand>
        <name>Mn(2+)</name>
        <dbReference type="ChEBI" id="CHEBI:29035"/>
        <label>2</label>
    </ligand>
</feature>
<feature type="binding site" evidence="2">
    <location>
        <position position="240"/>
    </location>
    <ligand>
        <name>substrate</name>
    </ligand>
</feature>
<feature type="binding site" evidence="2">
    <location>
        <position position="271"/>
    </location>
    <ligand>
        <name>substrate</name>
    </ligand>
</feature>
<comment type="catalytic activity">
    <reaction evidence="1">
        <text>L-arginine + H2O = urea + L-ornithine</text>
        <dbReference type="Rhea" id="RHEA:20569"/>
        <dbReference type="ChEBI" id="CHEBI:15377"/>
        <dbReference type="ChEBI" id="CHEBI:16199"/>
        <dbReference type="ChEBI" id="CHEBI:32682"/>
        <dbReference type="ChEBI" id="CHEBI:46911"/>
        <dbReference type="EC" id="3.5.3.1"/>
    </reaction>
</comment>
<comment type="cofactor">
    <cofactor evidence="3">
        <name>Mn(2+)</name>
        <dbReference type="ChEBI" id="CHEBI:29035"/>
    </cofactor>
    <text evidence="3">Binds 2 manganese ions per subunit.</text>
</comment>
<comment type="pathway">
    <text evidence="1">Nitrogen metabolism; urea cycle; L-ornithine and urea from L-arginine: step 1/1.</text>
</comment>
<comment type="similarity">
    <text evidence="3">Belongs to the arginase family.</text>
</comment>
<comment type="sequence caution" evidence="4">
    <conflict type="erroneous initiation">
        <sequence resource="EMBL-CDS" id="AAL53638"/>
    </conflict>
</comment>
<reference key="1">
    <citation type="journal article" date="2002" name="Proc. Natl. Acad. Sci. U.S.A.">
        <title>The genome sequence of the facultative intracellular pathogen Brucella melitensis.</title>
        <authorList>
            <person name="DelVecchio V.G."/>
            <person name="Kapatral V."/>
            <person name="Redkar R.J."/>
            <person name="Patra G."/>
            <person name="Mujer C."/>
            <person name="Los T."/>
            <person name="Ivanova N."/>
            <person name="Anderson I."/>
            <person name="Bhattacharyya A."/>
            <person name="Lykidis A."/>
            <person name="Reznik G."/>
            <person name="Jablonski L."/>
            <person name="Larsen N."/>
            <person name="D'Souza M."/>
            <person name="Bernal A."/>
            <person name="Mazur M."/>
            <person name="Goltsman E."/>
            <person name="Selkov E."/>
            <person name="Elzer P.H."/>
            <person name="Hagius S."/>
            <person name="O'Callaghan D."/>
            <person name="Letesson J.-J."/>
            <person name="Haselkorn R."/>
            <person name="Kyrpides N.C."/>
            <person name="Overbeek R."/>
        </authorList>
    </citation>
    <scope>NUCLEOTIDE SEQUENCE [LARGE SCALE GENOMIC DNA]</scope>
    <source>
        <strain>ATCC 23456 / CCUG 17765 / NCTC 10094 / 16M</strain>
    </source>
</reference>
<keyword id="KW-0056">Arginine metabolism</keyword>
<keyword id="KW-0378">Hydrolase</keyword>
<keyword id="KW-0464">Manganese</keyword>
<keyword id="KW-0479">Metal-binding</keyword>